<accession>P67209</accession>
<accession>A0A1R3Y344</accession>
<accession>O53305</accession>
<accession>X2BML1</accession>
<gene>
    <name type="ordered locus">BQ2027_MB3115</name>
</gene>
<feature type="chain" id="PRO_0000222915" description="Putative diacyglycerol O-acyltransferase Mb3115">
    <location>
        <begin position="1"/>
        <end position="474"/>
    </location>
</feature>
<feature type="active site" description="Proton acceptor" evidence="2">
    <location>
        <position position="135"/>
    </location>
</feature>
<name>Y3115_MYCBO</name>
<protein>
    <recommendedName>
        <fullName>Putative diacyglycerol O-acyltransferase Mb3115</fullName>
        <ecNumber evidence="1">2.3.1.20</ecNumber>
    </recommendedName>
    <alternativeName>
        <fullName>Putative triacylglycerol synthase Mb3115</fullName>
    </alternativeName>
</protein>
<reference key="1">
    <citation type="journal article" date="2003" name="Proc. Natl. Acad. Sci. U.S.A.">
        <title>The complete genome sequence of Mycobacterium bovis.</title>
        <authorList>
            <person name="Garnier T."/>
            <person name="Eiglmeier K."/>
            <person name="Camus J.-C."/>
            <person name="Medina N."/>
            <person name="Mansoor H."/>
            <person name="Pryor M."/>
            <person name="Duthoy S."/>
            <person name="Grondin S."/>
            <person name="Lacroix C."/>
            <person name="Monsempe C."/>
            <person name="Simon S."/>
            <person name="Harris B."/>
            <person name="Atkin R."/>
            <person name="Doggett J."/>
            <person name="Mayes R."/>
            <person name="Keating L."/>
            <person name="Wheeler P.R."/>
            <person name="Parkhill J."/>
            <person name="Barrell B.G."/>
            <person name="Cole S.T."/>
            <person name="Gordon S.V."/>
            <person name="Hewinson R.G."/>
        </authorList>
    </citation>
    <scope>NUCLEOTIDE SEQUENCE [LARGE SCALE GENOMIC DNA]</scope>
    <source>
        <strain>ATCC BAA-935 / AF2122/97</strain>
    </source>
</reference>
<reference key="2">
    <citation type="journal article" date="2017" name="Genome Announc.">
        <title>Updated reference genome sequence and annotation of Mycobacterium bovis AF2122/97.</title>
        <authorList>
            <person name="Malone K.M."/>
            <person name="Farrell D."/>
            <person name="Stuber T.P."/>
            <person name="Schubert O.T."/>
            <person name="Aebersold R."/>
            <person name="Robbe-Austerman S."/>
            <person name="Gordon S.V."/>
        </authorList>
    </citation>
    <scope>NUCLEOTIDE SEQUENCE [LARGE SCALE GENOMIC DNA]</scope>
    <scope>GENOME REANNOTATION</scope>
    <source>
        <strain>ATCC BAA-935 / AF2122/97</strain>
    </source>
</reference>
<keyword id="KW-0012">Acyltransferase</keyword>
<keyword id="KW-0319">Glycerol metabolism</keyword>
<keyword id="KW-0444">Lipid biosynthesis</keyword>
<keyword id="KW-0443">Lipid metabolism</keyword>
<keyword id="KW-1185">Reference proteome</keyword>
<keyword id="KW-0808">Transferase</keyword>
<proteinExistence type="inferred from homology"/>
<evidence type="ECO:0000250" key="1">
    <source>
        <dbReference type="UniProtKB" id="P9WKC9"/>
    </source>
</evidence>
<evidence type="ECO:0000255" key="2"/>
<evidence type="ECO:0000305" key="3"/>
<sequence length="474" mass="50887">MTRINPIDLSFLLLERANRPNHMAAYTIFEKPKGQKSSFGPRLFDAYRHSQAAKPFNHKLKWLGTDVAAWETVEPDMGYHIRHLALPAPGSMQQFHETVSFLNTGLLDRGHPMWECYIIDGIERGRIAILLKVHHALIDGEGGLRAMRNFLSDSPDDTTLAGPWMSAQGADRPRRTPATVSRRAQLQGQLQGMIKGLTKLPSGLFGVSADAADLGAQALSLKARKASLPFTARRTLFNNTAKSAARAYGNVELPLADVKALAKATGTSVNDVVMTVIDDALHHYLAEHQASTDRPLVAFMPMSLREKSGEGGGNRVSAELVPMGAPKASPVERLKEINAATTRAKDKGRGMQTTSRQAYALLLLGSLTVADALPLLGKLPSANVVISNMKGPTEQLYLAGAPLVAFSGLPIVPPGAGLNVTFASINTALCIAIGAAPEAVHEPSRLAELMQRAFTELQTEAGTTSPTTSKSRTP</sequence>
<comment type="catalytic activity">
    <reaction evidence="1">
        <text>an acyl-CoA + a 1,2-diacyl-sn-glycerol = a triacyl-sn-glycerol + CoA</text>
        <dbReference type="Rhea" id="RHEA:10868"/>
        <dbReference type="ChEBI" id="CHEBI:17815"/>
        <dbReference type="ChEBI" id="CHEBI:57287"/>
        <dbReference type="ChEBI" id="CHEBI:58342"/>
        <dbReference type="ChEBI" id="CHEBI:64615"/>
        <dbReference type="EC" id="2.3.1.20"/>
    </reaction>
</comment>
<comment type="pathway">
    <text>Glycerolipid metabolism; triacylglycerol biosynthesis.</text>
</comment>
<comment type="similarity">
    <text evidence="3">Belongs to the long-chain O-acyltransferase family.</text>
</comment>
<organism>
    <name type="scientific">Mycobacterium bovis (strain ATCC BAA-935 / AF2122/97)</name>
    <dbReference type="NCBI Taxonomy" id="233413"/>
    <lineage>
        <taxon>Bacteria</taxon>
        <taxon>Bacillati</taxon>
        <taxon>Actinomycetota</taxon>
        <taxon>Actinomycetes</taxon>
        <taxon>Mycobacteriales</taxon>
        <taxon>Mycobacteriaceae</taxon>
        <taxon>Mycobacterium</taxon>
        <taxon>Mycobacterium tuberculosis complex</taxon>
    </lineage>
</organism>
<dbReference type="EC" id="2.3.1.20" evidence="1"/>
<dbReference type="EMBL" id="LT708304">
    <property type="protein sequence ID" value="SIU01740.1"/>
    <property type="molecule type" value="Genomic_DNA"/>
</dbReference>
<dbReference type="RefSeq" id="NP_856760.1">
    <property type="nucleotide sequence ID" value="NC_002945.3"/>
</dbReference>
<dbReference type="RefSeq" id="WP_003416079.1">
    <property type="nucleotide sequence ID" value="NC_002945.4"/>
</dbReference>
<dbReference type="SMR" id="P67209"/>
<dbReference type="KEGG" id="mbo:BQ2027_MB3115"/>
<dbReference type="PATRIC" id="fig|233413.5.peg.3422"/>
<dbReference type="UniPathway" id="UPA00282"/>
<dbReference type="Proteomes" id="UP000001419">
    <property type="component" value="Chromosome"/>
</dbReference>
<dbReference type="GO" id="GO:0005886">
    <property type="term" value="C:plasma membrane"/>
    <property type="evidence" value="ECO:0007669"/>
    <property type="project" value="TreeGrafter"/>
</dbReference>
<dbReference type="GO" id="GO:0004144">
    <property type="term" value="F:diacylglycerol O-acyltransferase activity"/>
    <property type="evidence" value="ECO:0007669"/>
    <property type="project" value="UniProtKB-EC"/>
</dbReference>
<dbReference type="GO" id="GO:0051701">
    <property type="term" value="P:biological process involved in interaction with host"/>
    <property type="evidence" value="ECO:0007669"/>
    <property type="project" value="TreeGrafter"/>
</dbReference>
<dbReference type="GO" id="GO:0006071">
    <property type="term" value="P:glycerol metabolic process"/>
    <property type="evidence" value="ECO:0007669"/>
    <property type="project" value="UniProtKB-KW"/>
</dbReference>
<dbReference type="GO" id="GO:0001666">
    <property type="term" value="P:response to hypoxia"/>
    <property type="evidence" value="ECO:0007669"/>
    <property type="project" value="TreeGrafter"/>
</dbReference>
<dbReference type="GO" id="GO:0071731">
    <property type="term" value="P:response to nitric oxide"/>
    <property type="evidence" value="ECO:0007669"/>
    <property type="project" value="TreeGrafter"/>
</dbReference>
<dbReference type="GO" id="GO:0019432">
    <property type="term" value="P:triglyceride biosynthetic process"/>
    <property type="evidence" value="ECO:0007669"/>
    <property type="project" value="UniProtKB-UniPathway"/>
</dbReference>
<dbReference type="InterPro" id="IPR014292">
    <property type="entry name" value="Acyl_transf_WS/DGAT"/>
</dbReference>
<dbReference type="InterPro" id="IPR045034">
    <property type="entry name" value="O-acyltransferase_WSD1-like"/>
</dbReference>
<dbReference type="InterPro" id="IPR009721">
    <property type="entry name" value="O-acyltransferase_WSD1_C"/>
</dbReference>
<dbReference type="InterPro" id="IPR004255">
    <property type="entry name" value="O-acyltransferase_WSD1_N"/>
</dbReference>
<dbReference type="NCBIfam" id="TIGR02946">
    <property type="entry name" value="acyl_WS_DGAT"/>
    <property type="match status" value="1"/>
</dbReference>
<dbReference type="PANTHER" id="PTHR31650">
    <property type="entry name" value="O-ACYLTRANSFERASE (WSD1-LIKE) FAMILY PROTEIN"/>
    <property type="match status" value="1"/>
</dbReference>
<dbReference type="PANTHER" id="PTHR31650:SF1">
    <property type="entry name" value="WAX ESTER SYNTHASE_DIACYLGLYCEROL ACYLTRANSFERASE 4-RELATED"/>
    <property type="match status" value="1"/>
</dbReference>
<dbReference type="Pfam" id="PF06974">
    <property type="entry name" value="WS_DGAT_C"/>
    <property type="match status" value="1"/>
</dbReference>
<dbReference type="Pfam" id="PF03007">
    <property type="entry name" value="WS_DGAT_cat"/>
    <property type="match status" value="1"/>
</dbReference>